<evidence type="ECO:0000255" key="1">
    <source>
        <dbReference type="HAMAP-Rule" id="MF_01031"/>
    </source>
</evidence>
<comment type="function">
    <text evidence="1">Catalyzes the isomerization between 2-isopropylmalate and 3-isopropylmalate, via the formation of 2-isopropylmaleate.</text>
</comment>
<comment type="catalytic activity">
    <reaction evidence="1">
        <text>(2R,3S)-3-isopropylmalate = (2S)-2-isopropylmalate</text>
        <dbReference type="Rhea" id="RHEA:32287"/>
        <dbReference type="ChEBI" id="CHEBI:1178"/>
        <dbReference type="ChEBI" id="CHEBI:35121"/>
        <dbReference type="EC" id="4.2.1.33"/>
    </reaction>
</comment>
<comment type="pathway">
    <text evidence="1">Amino-acid biosynthesis; L-leucine biosynthesis; L-leucine from 3-methyl-2-oxobutanoate: step 2/4.</text>
</comment>
<comment type="subunit">
    <text evidence="1">Heterodimer of LeuC and LeuD.</text>
</comment>
<comment type="similarity">
    <text evidence="1">Belongs to the LeuD family. LeuD type 1 subfamily.</text>
</comment>
<accession>B5Y1W5</accession>
<protein>
    <recommendedName>
        <fullName evidence="1">3-isopropylmalate dehydratase small subunit</fullName>
        <ecNumber evidence="1">4.2.1.33</ecNumber>
    </recommendedName>
    <alternativeName>
        <fullName evidence="1">Alpha-IPM isomerase</fullName>
        <shortName evidence="1">IPMI</shortName>
    </alternativeName>
    <alternativeName>
        <fullName evidence="1">Isopropylmalate isomerase</fullName>
    </alternativeName>
</protein>
<proteinExistence type="inferred from homology"/>
<name>LEUD_KLEP3</name>
<gene>
    <name evidence="1" type="primary">leuD</name>
    <name type="ordered locus">KPK_4665</name>
</gene>
<keyword id="KW-0028">Amino-acid biosynthesis</keyword>
<keyword id="KW-0100">Branched-chain amino acid biosynthesis</keyword>
<keyword id="KW-0432">Leucine biosynthesis</keyword>
<keyword id="KW-0456">Lyase</keyword>
<dbReference type="EC" id="4.2.1.33" evidence="1"/>
<dbReference type="EMBL" id="CP000964">
    <property type="protein sequence ID" value="ACI09462.1"/>
    <property type="molecule type" value="Genomic_DNA"/>
</dbReference>
<dbReference type="SMR" id="B5Y1W5"/>
<dbReference type="KEGG" id="kpe:KPK_4665"/>
<dbReference type="HOGENOM" id="CLU_081378_0_3_6"/>
<dbReference type="UniPathway" id="UPA00048">
    <property type="reaction ID" value="UER00071"/>
</dbReference>
<dbReference type="Proteomes" id="UP000001734">
    <property type="component" value="Chromosome"/>
</dbReference>
<dbReference type="GO" id="GO:0009316">
    <property type="term" value="C:3-isopropylmalate dehydratase complex"/>
    <property type="evidence" value="ECO:0007669"/>
    <property type="project" value="InterPro"/>
</dbReference>
<dbReference type="GO" id="GO:0003861">
    <property type="term" value="F:3-isopropylmalate dehydratase activity"/>
    <property type="evidence" value="ECO:0007669"/>
    <property type="project" value="UniProtKB-UniRule"/>
</dbReference>
<dbReference type="GO" id="GO:0009098">
    <property type="term" value="P:L-leucine biosynthetic process"/>
    <property type="evidence" value="ECO:0007669"/>
    <property type="project" value="UniProtKB-UniRule"/>
</dbReference>
<dbReference type="CDD" id="cd01577">
    <property type="entry name" value="IPMI_Swivel"/>
    <property type="match status" value="1"/>
</dbReference>
<dbReference type="FunFam" id="3.20.19.10:FF:000003">
    <property type="entry name" value="3-isopropylmalate dehydratase small subunit"/>
    <property type="match status" value="1"/>
</dbReference>
<dbReference type="Gene3D" id="3.20.19.10">
    <property type="entry name" value="Aconitase, domain 4"/>
    <property type="match status" value="1"/>
</dbReference>
<dbReference type="HAMAP" id="MF_01031">
    <property type="entry name" value="LeuD_type1"/>
    <property type="match status" value="1"/>
</dbReference>
<dbReference type="InterPro" id="IPR004431">
    <property type="entry name" value="3-IsopropMal_deHydase_ssu"/>
</dbReference>
<dbReference type="InterPro" id="IPR015928">
    <property type="entry name" value="Aconitase/3IPM_dehydase_swvl"/>
</dbReference>
<dbReference type="InterPro" id="IPR000573">
    <property type="entry name" value="AconitaseA/IPMdHydase_ssu_swvl"/>
</dbReference>
<dbReference type="InterPro" id="IPR033940">
    <property type="entry name" value="IPMI_Swivel"/>
</dbReference>
<dbReference type="InterPro" id="IPR050075">
    <property type="entry name" value="LeuD"/>
</dbReference>
<dbReference type="NCBIfam" id="TIGR00171">
    <property type="entry name" value="leuD"/>
    <property type="match status" value="1"/>
</dbReference>
<dbReference type="NCBIfam" id="NF002458">
    <property type="entry name" value="PRK01641.1"/>
    <property type="match status" value="1"/>
</dbReference>
<dbReference type="PANTHER" id="PTHR43345:SF5">
    <property type="entry name" value="3-ISOPROPYLMALATE DEHYDRATASE SMALL SUBUNIT"/>
    <property type="match status" value="1"/>
</dbReference>
<dbReference type="PANTHER" id="PTHR43345">
    <property type="entry name" value="3-ISOPROPYLMALATE DEHYDRATASE SMALL SUBUNIT 2-RELATED-RELATED"/>
    <property type="match status" value="1"/>
</dbReference>
<dbReference type="Pfam" id="PF00694">
    <property type="entry name" value="Aconitase_C"/>
    <property type="match status" value="1"/>
</dbReference>
<dbReference type="SUPFAM" id="SSF52016">
    <property type="entry name" value="LeuD/IlvD-like"/>
    <property type="match status" value="1"/>
</dbReference>
<reference key="1">
    <citation type="journal article" date="2008" name="PLoS Genet.">
        <title>Complete genome sequence of the N2-fixing broad host range endophyte Klebsiella pneumoniae 342 and virulence predictions verified in mice.</title>
        <authorList>
            <person name="Fouts D.E."/>
            <person name="Tyler H.L."/>
            <person name="DeBoy R.T."/>
            <person name="Daugherty S."/>
            <person name="Ren Q."/>
            <person name="Badger J.H."/>
            <person name="Durkin A.S."/>
            <person name="Huot H."/>
            <person name="Shrivastava S."/>
            <person name="Kothari S."/>
            <person name="Dodson R.J."/>
            <person name="Mohamoud Y."/>
            <person name="Khouri H."/>
            <person name="Roesch L.F.W."/>
            <person name="Krogfelt K.A."/>
            <person name="Struve C."/>
            <person name="Triplett E.W."/>
            <person name="Methe B.A."/>
        </authorList>
    </citation>
    <scope>NUCLEOTIDE SEQUENCE [LARGE SCALE GENOMIC DNA]</scope>
    <source>
        <strain>342</strain>
    </source>
</reference>
<sequence length="201" mass="22571">MAEKFTQHTGLVVPLDAANVDTDAIIPKQFLQKVTRTGFGAHLFNDWRFLDDKGQQPNPDFVLNFPQYKGASILLARENFGCGSSREHAPWALTDYGFKVVIAPSFADIFYGNSFNNQLLPVTLSDEQVDELFKLVQANPGMTFEVDLEAQVVKAGDKTYSFKIDDFRRHCMLNGLDSIGLTLQHGEAISDYERKLPAFMN</sequence>
<feature type="chain" id="PRO_1000135811" description="3-isopropylmalate dehydratase small subunit">
    <location>
        <begin position="1"/>
        <end position="201"/>
    </location>
</feature>
<organism>
    <name type="scientific">Klebsiella pneumoniae (strain 342)</name>
    <dbReference type="NCBI Taxonomy" id="507522"/>
    <lineage>
        <taxon>Bacteria</taxon>
        <taxon>Pseudomonadati</taxon>
        <taxon>Pseudomonadota</taxon>
        <taxon>Gammaproteobacteria</taxon>
        <taxon>Enterobacterales</taxon>
        <taxon>Enterobacteriaceae</taxon>
        <taxon>Klebsiella/Raoultella group</taxon>
        <taxon>Klebsiella</taxon>
        <taxon>Klebsiella pneumoniae complex</taxon>
    </lineage>
</organism>